<sequence length="342" mass="36960">MTETAELTAATDADVLAVAREQVLEQGVGLTQEQVLRVLQLPDDRLEELLALAHEVRMRWCGPEVEVEGIISLKTGGCPEDCHFCSQSGLFASPVRSAWLDIPSLVEAAKQTAKSGATEFCIVAAVRGPDERLLAQVAAGIEAIRNEVDIQIACSLGMLTQEQVDRLSAMGVHRYNHNLETAKSHFPNVVTTHSWEERWDTLKMVREAGMEVCCGGILGMGETLEQRAEFAANLAELEPDEVPLNFLNPRPGTPFGDLEVLPASDALRAVAAFRLALPRTMLRFAGGREITLGDLGAKQGILGGINAVIVGNYLTTLGRPAEADLELLDDLQMPIKALNSSL</sequence>
<protein>
    <recommendedName>
        <fullName evidence="1">Biotin synthase</fullName>
        <ecNumber evidence="1">2.8.1.6</ecNumber>
    </recommendedName>
</protein>
<feature type="chain" id="PRO_0000381476" description="Biotin synthase">
    <location>
        <begin position="1"/>
        <end position="342"/>
    </location>
</feature>
<feature type="domain" description="Radical SAM core" evidence="2">
    <location>
        <begin position="63"/>
        <end position="288"/>
    </location>
</feature>
<feature type="binding site" evidence="1">
    <location>
        <position position="78"/>
    </location>
    <ligand>
        <name>[4Fe-4S] cluster</name>
        <dbReference type="ChEBI" id="CHEBI:49883"/>
        <note>4Fe-4S-S-AdoMet</note>
    </ligand>
</feature>
<feature type="binding site" evidence="1">
    <location>
        <position position="82"/>
    </location>
    <ligand>
        <name>[4Fe-4S] cluster</name>
        <dbReference type="ChEBI" id="CHEBI:49883"/>
        <note>4Fe-4S-S-AdoMet</note>
    </ligand>
</feature>
<feature type="binding site" evidence="1">
    <location>
        <position position="85"/>
    </location>
    <ligand>
        <name>[4Fe-4S] cluster</name>
        <dbReference type="ChEBI" id="CHEBI:49883"/>
        <note>4Fe-4S-S-AdoMet</note>
    </ligand>
</feature>
<feature type="binding site" evidence="1">
    <location>
        <position position="121"/>
    </location>
    <ligand>
        <name>[2Fe-2S] cluster</name>
        <dbReference type="ChEBI" id="CHEBI:190135"/>
    </ligand>
</feature>
<feature type="binding site" evidence="1">
    <location>
        <position position="154"/>
    </location>
    <ligand>
        <name>[2Fe-2S] cluster</name>
        <dbReference type="ChEBI" id="CHEBI:190135"/>
    </ligand>
</feature>
<feature type="binding site" evidence="1">
    <location>
        <position position="213"/>
    </location>
    <ligand>
        <name>[2Fe-2S] cluster</name>
        <dbReference type="ChEBI" id="CHEBI:190135"/>
    </ligand>
</feature>
<feature type="binding site" evidence="1">
    <location>
        <position position="283"/>
    </location>
    <ligand>
        <name>[2Fe-2S] cluster</name>
        <dbReference type="ChEBI" id="CHEBI:190135"/>
    </ligand>
</feature>
<organism>
    <name type="scientific">Mycobacteroides abscessus (strain ATCC 19977 / DSM 44196 / CCUG 20993 / CIP 104536 / JCM 13569 / NCTC 13031 / TMC 1543 / L948)</name>
    <name type="common">Mycobacterium abscessus</name>
    <dbReference type="NCBI Taxonomy" id="561007"/>
    <lineage>
        <taxon>Bacteria</taxon>
        <taxon>Bacillati</taxon>
        <taxon>Actinomycetota</taxon>
        <taxon>Actinomycetes</taxon>
        <taxon>Mycobacteriales</taxon>
        <taxon>Mycobacteriaceae</taxon>
        <taxon>Mycobacteroides</taxon>
        <taxon>Mycobacteroides abscessus</taxon>
    </lineage>
</organism>
<keyword id="KW-0001">2Fe-2S</keyword>
<keyword id="KW-0004">4Fe-4S</keyword>
<keyword id="KW-0093">Biotin biosynthesis</keyword>
<keyword id="KW-0408">Iron</keyword>
<keyword id="KW-0411">Iron-sulfur</keyword>
<keyword id="KW-0479">Metal-binding</keyword>
<keyword id="KW-1185">Reference proteome</keyword>
<keyword id="KW-0949">S-adenosyl-L-methionine</keyword>
<keyword id="KW-0808">Transferase</keyword>
<name>BIOB_MYCA9</name>
<gene>
    <name evidence="1" type="primary">bioB</name>
    <name type="ordered locus">MAB_2684c</name>
</gene>
<dbReference type="EC" id="2.8.1.6" evidence="1"/>
<dbReference type="EMBL" id="CU458896">
    <property type="protein sequence ID" value="CAM62764.1"/>
    <property type="molecule type" value="Genomic_DNA"/>
</dbReference>
<dbReference type="RefSeq" id="WP_005057907.1">
    <property type="nucleotide sequence ID" value="NZ_MLCG01000003.1"/>
</dbReference>
<dbReference type="SMR" id="B1MBZ3"/>
<dbReference type="GeneID" id="93379615"/>
<dbReference type="KEGG" id="mab:MAB_2684c"/>
<dbReference type="UniPathway" id="UPA00078">
    <property type="reaction ID" value="UER00162"/>
</dbReference>
<dbReference type="Proteomes" id="UP000007137">
    <property type="component" value="Chromosome"/>
</dbReference>
<dbReference type="GO" id="GO:0051537">
    <property type="term" value="F:2 iron, 2 sulfur cluster binding"/>
    <property type="evidence" value="ECO:0007669"/>
    <property type="project" value="UniProtKB-KW"/>
</dbReference>
<dbReference type="GO" id="GO:0051539">
    <property type="term" value="F:4 iron, 4 sulfur cluster binding"/>
    <property type="evidence" value="ECO:0007669"/>
    <property type="project" value="UniProtKB-KW"/>
</dbReference>
<dbReference type="GO" id="GO:0004076">
    <property type="term" value="F:biotin synthase activity"/>
    <property type="evidence" value="ECO:0007669"/>
    <property type="project" value="UniProtKB-UniRule"/>
</dbReference>
<dbReference type="GO" id="GO:0005506">
    <property type="term" value="F:iron ion binding"/>
    <property type="evidence" value="ECO:0007669"/>
    <property type="project" value="UniProtKB-UniRule"/>
</dbReference>
<dbReference type="GO" id="GO:0009102">
    <property type="term" value="P:biotin biosynthetic process"/>
    <property type="evidence" value="ECO:0007669"/>
    <property type="project" value="UniProtKB-UniRule"/>
</dbReference>
<dbReference type="CDD" id="cd01335">
    <property type="entry name" value="Radical_SAM"/>
    <property type="match status" value="1"/>
</dbReference>
<dbReference type="FunFam" id="3.20.20.70:FF:000026">
    <property type="entry name" value="Biotin synthase"/>
    <property type="match status" value="1"/>
</dbReference>
<dbReference type="Gene3D" id="3.20.20.70">
    <property type="entry name" value="Aldolase class I"/>
    <property type="match status" value="1"/>
</dbReference>
<dbReference type="HAMAP" id="MF_01694">
    <property type="entry name" value="BioB"/>
    <property type="match status" value="1"/>
</dbReference>
<dbReference type="InterPro" id="IPR013785">
    <property type="entry name" value="Aldolase_TIM"/>
</dbReference>
<dbReference type="InterPro" id="IPR010722">
    <property type="entry name" value="BATS_dom"/>
</dbReference>
<dbReference type="InterPro" id="IPR002684">
    <property type="entry name" value="Biotin_synth/BioAB"/>
</dbReference>
<dbReference type="InterPro" id="IPR024177">
    <property type="entry name" value="Biotin_synthase"/>
</dbReference>
<dbReference type="InterPro" id="IPR006638">
    <property type="entry name" value="Elp3/MiaA/NifB-like_rSAM"/>
</dbReference>
<dbReference type="InterPro" id="IPR007197">
    <property type="entry name" value="rSAM"/>
</dbReference>
<dbReference type="NCBIfam" id="TIGR00433">
    <property type="entry name" value="bioB"/>
    <property type="match status" value="1"/>
</dbReference>
<dbReference type="PANTHER" id="PTHR22976">
    <property type="entry name" value="BIOTIN SYNTHASE"/>
    <property type="match status" value="1"/>
</dbReference>
<dbReference type="PANTHER" id="PTHR22976:SF2">
    <property type="entry name" value="BIOTIN SYNTHASE, MITOCHONDRIAL"/>
    <property type="match status" value="1"/>
</dbReference>
<dbReference type="Pfam" id="PF06968">
    <property type="entry name" value="BATS"/>
    <property type="match status" value="1"/>
</dbReference>
<dbReference type="Pfam" id="PF04055">
    <property type="entry name" value="Radical_SAM"/>
    <property type="match status" value="1"/>
</dbReference>
<dbReference type="PIRSF" id="PIRSF001619">
    <property type="entry name" value="Biotin_synth"/>
    <property type="match status" value="1"/>
</dbReference>
<dbReference type="SFLD" id="SFLDG01060">
    <property type="entry name" value="BATS_domain_containing"/>
    <property type="match status" value="1"/>
</dbReference>
<dbReference type="SFLD" id="SFLDG01278">
    <property type="entry name" value="biotin_synthase_like"/>
    <property type="match status" value="1"/>
</dbReference>
<dbReference type="SMART" id="SM00876">
    <property type="entry name" value="BATS"/>
    <property type="match status" value="1"/>
</dbReference>
<dbReference type="SMART" id="SM00729">
    <property type="entry name" value="Elp3"/>
    <property type="match status" value="1"/>
</dbReference>
<dbReference type="SUPFAM" id="SSF102114">
    <property type="entry name" value="Radical SAM enzymes"/>
    <property type="match status" value="1"/>
</dbReference>
<dbReference type="PROSITE" id="PS51918">
    <property type="entry name" value="RADICAL_SAM"/>
    <property type="match status" value="1"/>
</dbReference>
<accession>B1MBZ3</accession>
<reference key="1">
    <citation type="journal article" date="2009" name="PLoS ONE">
        <title>Non mycobacterial virulence genes in the genome of the emerging pathogen Mycobacterium abscessus.</title>
        <authorList>
            <person name="Ripoll F."/>
            <person name="Pasek S."/>
            <person name="Schenowitz C."/>
            <person name="Dossat C."/>
            <person name="Barbe V."/>
            <person name="Rottman M."/>
            <person name="Macheras E."/>
            <person name="Heym B."/>
            <person name="Herrmann J.L."/>
            <person name="Daffe M."/>
            <person name="Brosch R."/>
            <person name="Risler J.L."/>
            <person name="Gaillard J.L."/>
        </authorList>
    </citation>
    <scope>NUCLEOTIDE SEQUENCE [LARGE SCALE GENOMIC DNA]</scope>
    <source>
        <strain>ATCC 19977 / DSM 44196 / CCUG 20993 / CIP 104536 / JCM 13569 / NCTC 13031 / TMC 1543 / L948</strain>
    </source>
</reference>
<evidence type="ECO:0000255" key="1">
    <source>
        <dbReference type="HAMAP-Rule" id="MF_01694"/>
    </source>
</evidence>
<evidence type="ECO:0000255" key="2">
    <source>
        <dbReference type="PROSITE-ProRule" id="PRU01266"/>
    </source>
</evidence>
<proteinExistence type="inferred from homology"/>
<comment type="function">
    <text evidence="1">Catalyzes the conversion of dethiobiotin (DTB) to biotin by the insertion of a sulfur atom into dethiobiotin via a radical-based mechanism.</text>
</comment>
<comment type="catalytic activity">
    <reaction evidence="1">
        <text>(4R,5S)-dethiobiotin + (sulfur carrier)-SH + 2 reduced [2Fe-2S]-[ferredoxin] + 2 S-adenosyl-L-methionine = (sulfur carrier)-H + biotin + 2 5'-deoxyadenosine + 2 L-methionine + 2 oxidized [2Fe-2S]-[ferredoxin]</text>
        <dbReference type="Rhea" id="RHEA:22060"/>
        <dbReference type="Rhea" id="RHEA-COMP:10000"/>
        <dbReference type="Rhea" id="RHEA-COMP:10001"/>
        <dbReference type="Rhea" id="RHEA-COMP:14737"/>
        <dbReference type="Rhea" id="RHEA-COMP:14739"/>
        <dbReference type="ChEBI" id="CHEBI:17319"/>
        <dbReference type="ChEBI" id="CHEBI:29917"/>
        <dbReference type="ChEBI" id="CHEBI:33737"/>
        <dbReference type="ChEBI" id="CHEBI:33738"/>
        <dbReference type="ChEBI" id="CHEBI:57586"/>
        <dbReference type="ChEBI" id="CHEBI:57844"/>
        <dbReference type="ChEBI" id="CHEBI:59789"/>
        <dbReference type="ChEBI" id="CHEBI:64428"/>
        <dbReference type="ChEBI" id="CHEBI:149473"/>
        <dbReference type="EC" id="2.8.1.6"/>
    </reaction>
</comment>
<comment type="cofactor">
    <cofactor evidence="1">
        <name>[4Fe-4S] cluster</name>
        <dbReference type="ChEBI" id="CHEBI:49883"/>
    </cofactor>
    <text evidence="1">Binds 1 [4Fe-4S] cluster. The cluster is coordinated with 3 cysteines and an exchangeable S-adenosyl-L-methionine.</text>
</comment>
<comment type="cofactor">
    <cofactor evidence="1">
        <name>[2Fe-2S] cluster</name>
        <dbReference type="ChEBI" id="CHEBI:190135"/>
    </cofactor>
    <text evidence="1">Binds 1 [2Fe-2S] cluster. The cluster is coordinated with 3 cysteines and 1 arginine.</text>
</comment>
<comment type="pathway">
    <text evidence="1">Cofactor biosynthesis; biotin biosynthesis; biotin from 7,8-diaminononanoate: step 2/2.</text>
</comment>
<comment type="subunit">
    <text evidence="1">Homodimer.</text>
</comment>
<comment type="similarity">
    <text evidence="1">Belongs to the radical SAM superfamily. Biotin synthase family.</text>
</comment>